<accession>Q0TA71</accession>
<gene>
    <name evidence="1" type="primary">thiC</name>
    <name type="ordered locus">ECP_4207</name>
</gene>
<evidence type="ECO:0000255" key="1">
    <source>
        <dbReference type="HAMAP-Rule" id="MF_00089"/>
    </source>
</evidence>
<proteinExistence type="inferred from homology"/>
<name>THIC_ECOL5</name>
<keyword id="KW-0004">4Fe-4S</keyword>
<keyword id="KW-0408">Iron</keyword>
<keyword id="KW-0411">Iron-sulfur</keyword>
<keyword id="KW-0456">Lyase</keyword>
<keyword id="KW-0479">Metal-binding</keyword>
<keyword id="KW-0949">S-adenosyl-L-methionine</keyword>
<keyword id="KW-0784">Thiamine biosynthesis</keyword>
<keyword id="KW-0862">Zinc</keyword>
<reference key="1">
    <citation type="journal article" date="2006" name="Mol. Microbiol.">
        <title>Role of pathogenicity island-associated integrases in the genome plasticity of uropathogenic Escherichia coli strain 536.</title>
        <authorList>
            <person name="Hochhut B."/>
            <person name="Wilde C."/>
            <person name="Balling G."/>
            <person name="Middendorf B."/>
            <person name="Dobrindt U."/>
            <person name="Brzuszkiewicz E."/>
            <person name="Gottschalk G."/>
            <person name="Carniel E."/>
            <person name="Hacker J."/>
        </authorList>
    </citation>
    <scope>NUCLEOTIDE SEQUENCE [LARGE SCALE GENOMIC DNA]</scope>
    <source>
        <strain>536 / UPEC</strain>
    </source>
</reference>
<protein>
    <recommendedName>
        <fullName evidence="1">Phosphomethylpyrimidine synthase</fullName>
        <ecNumber evidence="1">4.1.99.17</ecNumber>
    </recommendedName>
    <alternativeName>
        <fullName evidence="1">Hydroxymethylpyrimidine phosphate synthase</fullName>
        <shortName evidence="1">HMP-P synthase</shortName>
        <shortName evidence="1">HMP-phosphate synthase</shortName>
        <shortName evidence="1">HMPP synthase</shortName>
    </alternativeName>
    <alternativeName>
        <fullName evidence="1">Thiamine biosynthesis protein ThiC</fullName>
    </alternativeName>
</protein>
<feature type="chain" id="PRO_1000004759" description="Phosphomethylpyrimidine synthase">
    <location>
        <begin position="1"/>
        <end position="631"/>
    </location>
</feature>
<feature type="binding site" evidence="1">
    <location>
        <position position="239"/>
    </location>
    <ligand>
        <name>substrate</name>
    </ligand>
</feature>
<feature type="binding site" evidence="1">
    <location>
        <position position="268"/>
    </location>
    <ligand>
        <name>substrate</name>
    </ligand>
</feature>
<feature type="binding site" evidence="1">
    <location>
        <position position="297"/>
    </location>
    <ligand>
        <name>substrate</name>
    </ligand>
</feature>
<feature type="binding site" evidence="1">
    <location>
        <position position="333"/>
    </location>
    <ligand>
        <name>substrate</name>
    </ligand>
</feature>
<feature type="binding site" evidence="1">
    <location>
        <begin position="353"/>
        <end position="355"/>
    </location>
    <ligand>
        <name>substrate</name>
    </ligand>
</feature>
<feature type="binding site" evidence="1">
    <location>
        <begin position="394"/>
        <end position="397"/>
    </location>
    <ligand>
        <name>substrate</name>
    </ligand>
</feature>
<feature type="binding site" evidence="1">
    <location>
        <position position="433"/>
    </location>
    <ligand>
        <name>substrate</name>
    </ligand>
</feature>
<feature type="binding site" evidence="1">
    <location>
        <position position="437"/>
    </location>
    <ligand>
        <name>Zn(2+)</name>
        <dbReference type="ChEBI" id="CHEBI:29105"/>
    </ligand>
</feature>
<feature type="binding site" evidence="1">
    <location>
        <position position="460"/>
    </location>
    <ligand>
        <name>substrate</name>
    </ligand>
</feature>
<feature type="binding site" evidence="1">
    <location>
        <position position="501"/>
    </location>
    <ligand>
        <name>Zn(2+)</name>
        <dbReference type="ChEBI" id="CHEBI:29105"/>
    </ligand>
</feature>
<feature type="binding site" evidence="1">
    <location>
        <position position="581"/>
    </location>
    <ligand>
        <name>[4Fe-4S] cluster</name>
        <dbReference type="ChEBI" id="CHEBI:49883"/>
        <note>4Fe-4S-S-AdoMet</note>
    </ligand>
</feature>
<feature type="binding site" evidence="1">
    <location>
        <position position="584"/>
    </location>
    <ligand>
        <name>[4Fe-4S] cluster</name>
        <dbReference type="ChEBI" id="CHEBI:49883"/>
        <note>4Fe-4S-S-AdoMet</note>
    </ligand>
</feature>
<feature type="binding site" evidence="1">
    <location>
        <position position="589"/>
    </location>
    <ligand>
        <name>[4Fe-4S] cluster</name>
        <dbReference type="ChEBI" id="CHEBI:49883"/>
        <note>4Fe-4S-S-AdoMet</note>
    </ligand>
</feature>
<sequence>MSATKLTRREQRAQAQHFIDTLEGSAFPNSKRIYITGTHPGVRVPMREIQLSPTLIGGSKEQPQYEENEAIPVYDTSGPYGDPQIAINVQQGLAKLRQPWIDARGDTEELTVRSSDYTKARLADDGLDELRFSGVLTPKRAKAGHRVTQLHYARKGIITPEMEFIAIRENMGRERIRSEVLRHQHPGMSFGARLPENITAEFVRDEVAAGRAIIPANINHPESEPMIIGRNFLVKVNANIGNSAVTSSIEEEVEKLVWSTRWGADTVMDLSTGRYIHETREWILRNSPVPIGTVPIYQALEKVNGIAEDLTWEVFRDTLLEQAEQGVDYFTIHAGVLLRYVPMTAKRLTGIVSRGGSIMAKWCLSHHQENFLYQHFREICEICAAYDVSLSLGDGLRPGSIQDANDEAQFAELHTLGELTKIAWEYDVQVMIEGPGHVPMQMIRRNMTEELEHCHEAPFYTLGPLTTDIAPGYDHFTSGIGAAMIGWFGCAMLCYVTPKEHLGLPNKEDVKQGLITYKIAAHAADLAKGHPGAQIRDNAMSKARFEFRWEDQFNLALDPFTARAYHDETLPQESGKVAHFCSMCGPKFCSMKISQEVRDYAAAQTIEVGMADMSENFRARGGEIYLRKEEA</sequence>
<organism>
    <name type="scientific">Escherichia coli O6:K15:H31 (strain 536 / UPEC)</name>
    <dbReference type="NCBI Taxonomy" id="362663"/>
    <lineage>
        <taxon>Bacteria</taxon>
        <taxon>Pseudomonadati</taxon>
        <taxon>Pseudomonadota</taxon>
        <taxon>Gammaproteobacteria</taxon>
        <taxon>Enterobacterales</taxon>
        <taxon>Enterobacteriaceae</taxon>
        <taxon>Escherichia</taxon>
    </lineage>
</organism>
<comment type="function">
    <text evidence="1">Catalyzes the synthesis of the hydroxymethylpyrimidine phosphate (HMP-P) moiety of thiamine from aminoimidazole ribotide (AIR) in a radical S-adenosyl-L-methionine (SAM)-dependent reaction.</text>
</comment>
<comment type="catalytic activity">
    <reaction evidence="1">
        <text>5-amino-1-(5-phospho-beta-D-ribosyl)imidazole + S-adenosyl-L-methionine = 4-amino-2-methyl-5-(phosphooxymethyl)pyrimidine + CO + 5'-deoxyadenosine + formate + L-methionine + 3 H(+)</text>
        <dbReference type="Rhea" id="RHEA:24840"/>
        <dbReference type="ChEBI" id="CHEBI:15378"/>
        <dbReference type="ChEBI" id="CHEBI:15740"/>
        <dbReference type="ChEBI" id="CHEBI:17245"/>
        <dbReference type="ChEBI" id="CHEBI:17319"/>
        <dbReference type="ChEBI" id="CHEBI:57844"/>
        <dbReference type="ChEBI" id="CHEBI:58354"/>
        <dbReference type="ChEBI" id="CHEBI:59789"/>
        <dbReference type="ChEBI" id="CHEBI:137981"/>
        <dbReference type="EC" id="4.1.99.17"/>
    </reaction>
</comment>
<comment type="cofactor">
    <cofactor evidence="1">
        <name>[4Fe-4S] cluster</name>
        <dbReference type="ChEBI" id="CHEBI:49883"/>
    </cofactor>
    <text evidence="1">Binds 1 [4Fe-4S] cluster per subunit. The cluster is coordinated with 3 cysteines and an exchangeable S-adenosyl-L-methionine.</text>
</comment>
<comment type="pathway">
    <text evidence="1">Cofactor biosynthesis; thiamine diphosphate biosynthesis.</text>
</comment>
<comment type="subunit">
    <text evidence="1">Homodimer.</text>
</comment>
<comment type="similarity">
    <text evidence="1">Belongs to the ThiC family.</text>
</comment>
<dbReference type="EC" id="4.1.99.17" evidence="1"/>
<dbReference type="EMBL" id="CP000247">
    <property type="protein sequence ID" value="ABG72158.1"/>
    <property type="molecule type" value="Genomic_DNA"/>
</dbReference>
<dbReference type="RefSeq" id="WP_001298657.1">
    <property type="nucleotide sequence ID" value="NC_008253.1"/>
</dbReference>
<dbReference type="SMR" id="Q0TA71"/>
<dbReference type="KEGG" id="ecp:ECP_4207"/>
<dbReference type="HOGENOM" id="CLU_013181_2_1_6"/>
<dbReference type="UniPathway" id="UPA00060"/>
<dbReference type="Proteomes" id="UP000009182">
    <property type="component" value="Chromosome"/>
</dbReference>
<dbReference type="GO" id="GO:0005829">
    <property type="term" value="C:cytosol"/>
    <property type="evidence" value="ECO:0007669"/>
    <property type="project" value="TreeGrafter"/>
</dbReference>
<dbReference type="GO" id="GO:0051539">
    <property type="term" value="F:4 iron, 4 sulfur cluster binding"/>
    <property type="evidence" value="ECO:0007669"/>
    <property type="project" value="UniProtKB-KW"/>
</dbReference>
<dbReference type="GO" id="GO:0016830">
    <property type="term" value="F:carbon-carbon lyase activity"/>
    <property type="evidence" value="ECO:0007669"/>
    <property type="project" value="InterPro"/>
</dbReference>
<dbReference type="GO" id="GO:0008270">
    <property type="term" value="F:zinc ion binding"/>
    <property type="evidence" value="ECO:0007669"/>
    <property type="project" value="UniProtKB-UniRule"/>
</dbReference>
<dbReference type="GO" id="GO:0009228">
    <property type="term" value="P:thiamine biosynthetic process"/>
    <property type="evidence" value="ECO:0007669"/>
    <property type="project" value="UniProtKB-KW"/>
</dbReference>
<dbReference type="GO" id="GO:0009229">
    <property type="term" value="P:thiamine diphosphate biosynthetic process"/>
    <property type="evidence" value="ECO:0007669"/>
    <property type="project" value="UniProtKB-UniRule"/>
</dbReference>
<dbReference type="FunFam" id="3.20.20.540:FF:000001">
    <property type="entry name" value="Phosphomethylpyrimidine synthase"/>
    <property type="match status" value="1"/>
</dbReference>
<dbReference type="Gene3D" id="6.10.250.620">
    <property type="match status" value="1"/>
</dbReference>
<dbReference type="Gene3D" id="3.20.20.540">
    <property type="entry name" value="Radical SAM ThiC family, central domain"/>
    <property type="match status" value="1"/>
</dbReference>
<dbReference type="HAMAP" id="MF_00089">
    <property type="entry name" value="ThiC"/>
    <property type="match status" value="1"/>
</dbReference>
<dbReference type="InterPro" id="IPR037509">
    <property type="entry name" value="ThiC"/>
</dbReference>
<dbReference type="InterPro" id="IPR025747">
    <property type="entry name" value="ThiC-associated_dom"/>
</dbReference>
<dbReference type="InterPro" id="IPR038521">
    <property type="entry name" value="ThiC/Bza_core_dom"/>
</dbReference>
<dbReference type="InterPro" id="IPR002817">
    <property type="entry name" value="ThiC/BzaA/B"/>
</dbReference>
<dbReference type="NCBIfam" id="NF006763">
    <property type="entry name" value="PRK09284.1"/>
    <property type="match status" value="1"/>
</dbReference>
<dbReference type="NCBIfam" id="NF009895">
    <property type="entry name" value="PRK13352.1"/>
    <property type="match status" value="1"/>
</dbReference>
<dbReference type="NCBIfam" id="TIGR00190">
    <property type="entry name" value="thiC"/>
    <property type="match status" value="1"/>
</dbReference>
<dbReference type="PANTHER" id="PTHR30557:SF1">
    <property type="entry name" value="PHOSPHOMETHYLPYRIMIDINE SYNTHASE, CHLOROPLASTIC"/>
    <property type="match status" value="1"/>
</dbReference>
<dbReference type="PANTHER" id="PTHR30557">
    <property type="entry name" value="THIAMINE BIOSYNTHESIS PROTEIN THIC"/>
    <property type="match status" value="1"/>
</dbReference>
<dbReference type="Pfam" id="PF13667">
    <property type="entry name" value="ThiC-associated"/>
    <property type="match status" value="1"/>
</dbReference>
<dbReference type="Pfam" id="PF01964">
    <property type="entry name" value="ThiC_Rad_SAM"/>
    <property type="match status" value="1"/>
</dbReference>
<dbReference type="SFLD" id="SFLDF00407">
    <property type="entry name" value="phosphomethylpyrimidine_syntha"/>
    <property type="match status" value="1"/>
</dbReference>
<dbReference type="SFLD" id="SFLDG01114">
    <property type="entry name" value="phosphomethylpyrimidine_syntha"/>
    <property type="match status" value="1"/>
</dbReference>
<dbReference type="SFLD" id="SFLDS00113">
    <property type="entry name" value="Radical_SAM_Phosphomethylpyrim"/>
    <property type="match status" value="1"/>
</dbReference>